<organism>
    <name type="scientific">Drosophila melanogaster</name>
    <name type="common">Fruit fly</name>
    <dbReference type="NCBI Taxonomy" id="7227"/>
    <lineage>
        <taxon>Eukaryota</taxon>
        <taxon>Metazoa</taxon>
        <taxon>Ecdysozoa</taxon>
        <taxon>Arthropoda</taxon>
        <taxon>Hexapoda</taxon>
        <taxon>Insecta</taxon>
        <taxon>Pterygota</taxon>
        <taxon>Neoptera</taxon>
        <taxon>Endopterygota</taxon>
        <taxon>Diptera</taxon>
        <taxon>Brachycera</taxon>
        <taxon>Muscomorpha</taxon>
        <taxon>Ephydroidea</taxon>
        <taxon>Drosophilidae</taxon>
        <taxon>Drosophila</taxon>
        <taxon>Sophophora</taxon>
    </lineage>
</organism>
<dbReference type="EC" id="6.1.1.20"/>
<dbReference type="EMBL" id="AF012089">
    <property type="protein sequence ID" value="AAB65750.2"/>
    <property type="molecule type" value="Genomic_DNA"/>
</dbReference>
<dbReference type="EMBL" id="AE013599">
    <property type="protein sequence ID" value="AAF58310.1"/>
    <property type="molecule type" value="Genomic_DNA"/>
</dbReference>
<dbReference type="EMBL" id="AY058580">
    <property type="protein sequence ID" value="AAL13809.1"/>
    <property type="molecule type" value="mRNA"/>
</dbReference>
<dbReference type="RefSeq" id="NP_477283.1">
    <property type="nucleotide sequence ID" value="NM_057935.5"/>
</dbReference>
<dbReference type="SMR" id="O16129"/>
<dbReference type="BioGRID" id="62301">
    <property type="interactions" value="4"/>
</dbReference>
<dbReference type="FunCoup" id="O16129">
    <property type="interactions" value="1621"/>
</dbReference>
<dbReference type="IntAct" id="O16129">
    <property type="interactions" value="1"/>
</dbReference>
<dbReference type="STRING" id="7227.FBpp0086720"/>
<dbReference type="PaxDb" id="7227-FBpp0086720"/>
<dbReference type="DNASU" id="36547"/>
<dbReference type="EnsemblMetazoa" id="FBtr0087594">
    <property type="protein sequence ID" value="FBpp0086720"/>
    <property type="gene ID" value="FBgn0275436"/>
</dbReference>
<dbReference type="GeneID" id="36547"/>
<dbReference type="KEGG" id="dme:Dmel_CG13348"/>
<dbReference type="AGR" id="FB:FBgn0275436"/>
<dbReference type="CTD" id="36547"/>
<dbReference type="FlyBase" id="FBgn0275436">
    <property type="gene designation" value="PheRS-m"/>
</dbReference>
<dbReference type="VEuPathDB" id="VectorBase:FBgn0275436"/>
<dbReference type="eggNOG" id="KOG2783">
    <property type="taxonomic scope" value="Eukaryota"/>
</dbReference>
<dbReference type="GeneTree" id="ENSGT00940000158071"/>
<dbReference type="HOGENOM" id="CLU_022696_1_0_1"/>
<dbReference type="InParanoid" id="O16129"/>
<dbReference type="OMA" id="PISHYPQ"/>
<dbReference type="OrthoDB" id="4457at2759"/>
<dbReference type="PhylomeDB" id="O16129"/>
<dbReference type="SignaLink" id="O16129"/>
<dbReference type="BioGRID-ORCS" id="36547">
    <property type="hits" value="0 hits in 3 CRISPR screens"/>
</dbReference>
<dbReference type="GenomeRNAi" id="36547"/>
<dbReference type="PRO" id="PR:O16129"/>
<dbReference type="Proteomes" id="UP000000803">
    <property type="component" value="Chromosome 2R"/>
</dbReference>
<dbReference type="Bgee" id="FBgn0275436">
    <property type="expression patterns" value="Expressed in thoracico-abdominal ganglion (Drosophila) and 125 other cell types or tissues"/>
</dbReference>
<dbReference type="GO" id="GO:0005737">
    <property type="term" value="C:cytoplasm"/>
    <property type="evidence" value="ECO:0000318"/>
    <property type="project" value="GO_Central"/>
</dbReference>
<dbReference type="GO" id="GO:0005759">
    <property type="term" value="C:mitochondrial matrix"/>
    <property type="evidence" value="ECO:0007669"/>
    <property type="project" value="UniProtKB-SubCell"/>
</dbReference>
<dbReference type="GO" id="GO:0005739">
    <property type="term" value="C:mitochondrion"/>
    <property type="evidence" value="ECO:0000250"/>
    <property type="project" value="UniProtKB"/>
</dbReference>
<dbReference type="GO" id="GO:0005524">
    <property type="term" value="F:ATP binding"/>
    <property type="evidence" value="ECO:0007669"/>
    <property type="project" value="UniProtKB-KW"/>
</dbReference>
<dbReference type="GO" id="GO:0004826">
    <property type="term" value="F:phenylalanine-tRNA ligase activity"/>
    <property type="evidence" value="ECO:0000315"/>
    <property type="project" value="FlyBase"/>
</dbReference>
<dbReference type="GO" id="GO:0000049">
    <property type="term" value="F:tRNA binding"/>
    <property type="evidence" value="ECO:0000250"/>
    <property type="project" value="UniProtKB"/>
</dbReference>
<dbReference type="GO" id="GO:0006432">
    <property type="term" value="P:phenylalanyl-tRNA aminoacylation"/>
    <property type="evidence" value="ECO:0000315"/>
    <property type="project" value="FlyBase"/>
</dbReference>
<dbReference type="GO" id="GO:0008033">
    <property type="term" value="P:tRNA processing"/>
    <property type="evidence" value="ECO:0000250"/>
    <property type="project" value="UniProtKB"/>
</dbReference>
<dbReference type="CDD" id="cd00496">
    <property type="entry name" value="PheRS_alpha_core"/>
    <property type="match status" value="1"/>
</dbReference>
<dbReference type="FunFam" id="3.30.70.380:FF:000002">
    <property type="entry name" value="phenylalanine--tRNA ligase, mitochondrial"/>
    <property type="match status" value="1"/>
</dbReference>
<dbReference type="FunFam" id="3.30.930.10:FF:000053">
    <property type="entry name" value="Phenylalanyl-tRNA synthetase mitochondrial"/>
    <property type="match status" value="1"/>
</dbReference>
<dbReference type="Gene3D" id="3.30.930.10">
    <property type="entry name" value="Bira Bifunctional Protein, Domain 2"/>
    <property type="match status" value="1"/>
</dbReference>
<dbReference type="Gene3D" id="3.30.70.380">
    <property type="entry name" value="Ferrodoxin-fold anticodon-binding domain"/>
    <property type="match status" value="1"/>
</dbReference>
<dbReference type="InterPro" id="IPR006195">
    <property type="entry name" value="aa-tRNA-synth_II"/>
</dbReference>
<dbReference type="InterPro" id="IPR045864">
    <property type="entry name" value="aa-tRNA-synth_II/BPL/LPL"/>
</dbReference>
<dbReference type="InterPro" id="IPR005121">
    <property type="entry name" value="Fdx_antiC-bd"/>
</dbReference>
<dbReference type="InterPro" id="IPR036690">
    <property type="entry name" value="Fdx_antiC-bd_sf"/>
</dbReference>
<dbReference type="InterPro" id="IPR004530">
    <property type="entry name" value="Phe-tRNA-synth_IIc_mito"/>
</dbReference>
<dbReference type="InterPro" id="IPR002319">
    <property type="entry name" value="Phenylalanyl-tRNA_Synthase"/>
</dbReference>
<dbReference type="NCBIfam" id="TIGR00469">
    <property type="entry name" value="pheS_mito"/>
    <property type="match status" value="1"/>
</dbReference>
<dbReference type="PANTHER" id="PTHR11538:SF41">
    <property type="entry name" value="PHENYLALANINE--TRNA LIGASE, MITOCHONDRIAL"/>
    <property type="match status" value="1"/>
</dbReference>
<dbReference type="PANTHER" id="PTHR11538">
    <property type="entry name" value="PHENYLALANYL-TRNA SYNTHETASE"/>
    <property type="match status" value="1"/>
</dbReference>
<dbReference type="Pfam" id="PF03147">
    <property type="entry name" value="FDX-ACB"/>
    <property type="match status" value="1"/>
</dbReference>
<dbReference type="Pfam" id="PF01409">
    <property type="entry name" value="tRNA-synt_2d"/>
    <property type="match status" value="2"/>
</dbReference>
<dbReference type="SMART" id="SM00896">
    <property type="entry name" value="FDX-ACB"/>
    <property type="match status" value="1"/>
</dbReference>
<dbReference type="SUPFAM" id="SSF54991">
    <property type="entry name" value="Anticodon-binding domain of PheRS"/>
    <property type="match status" value="1"/>
</dbReference>
<dbReference type="SUPFAM" id="SSF55681">
    <property type="entry name" value="Class II aaRS and biotin synthetases"/>
    <property type="match status" value="1"/>
</dbReference>
<dbReference type="PROSITE" id="PS50862">
    <property type="entry name" value="AA_TRNA_LIGASE_II"/>
    <property type="match status" value="1"/>
</dbReference>
<dbReference type="PROSITE" id="PS51447">
    <property type="entry name" value="FDX_ACB"/>
    <property type="match status" value="1"/>
</dbReference>
<sequence length="453" mass="51996">MLLTLRVQGARHWLKSTRCLASSAAPAKSPSSPPQLEVSGSTYATDGWTNVTPKILSYVGANKHLQTDHPLSIIRQRIVNYFYGAYRNQRGNPLFSVYDQMNPVVTVQQNFDNLLIPADHVSRQKSDCYYINQQHLLRAHTTAHQVELISGGLDNFLVVGEVYRRDEIDSTHYPVFHQADAVRLVTKDKLFERNPGLELFEETWSGTLADPKLILPSSKFMDQTKQPCHTLEAVKLMEHEMKHVLVGLTKDLFGPRIKYRWVDTYFPFTQPSWELEIYFKDNWLEVLGCGIMRHEILQRSGVHQSIGYAFGVGLERLAMVLFDIPDIRLFWSNDSGFLSQFSEKDLHNLPKYKPISHYPQCTNDLSFWLPQDIEVDAGFSPNDFYDLVRSVAGDMVEQISLVDKFKHPKTGKSSVCFRIVYRHMERTLTQAEVNEIHKQIASASVDSFNVQIR</sequence>
<name>SYFM_DROME</name>
<accession>O16129</accession>
<accession>Q9V6V8</accession>
<evidence type="ECO:0000250" key="1"/>
<evidence type="ECO:0000250" key="2">
    <source>
        <dbReference type="UniProtKB" id="P15625"/>
    </source>
</evidence>
<evidence type="ECO:0000255" key="3"/>
<evidence type="ECO:0000255" key="4">
    <source>
        <dbReference type="PROSITE-ProRule" id="PRU00778"/>
    </source>
</evidence>
<evidence type="ECO:0000269" key="5">
    <source>
    </source>
</evidence>
<evidence type="ECO:0000269" key="6">
    <source>
    </source>
</evidence>
<evidence type="ECO:0000305" key="7"/>
<evidence type="ECO:0000312" key="8">
    <source>
        <dbReference type="FlyBase" id="FBgn0275436"/>
    </source>
</evidence>
<proteinExistence type="evidence at transcript level"/>
<gene>
    <name evidence="8" type="primary">PheRS-m</name>
    <name type="synonym">Aats-phe</name>
    <name evidence="8" type="synonym">Aats-phe-m</name>
    <name type="synonym">Pts</name>
    <name evidence="8" type="ORF">CG13348</name>
</gene>
<comment type="function">
    <text evidence="1">Is responsible for the charging of tRNA(Phe) with phenylalanine in mitochondrial translation.</text>
</comment>
<comment type="catalytic activity">
    <reaction evidence="2">
        <text>tRNA(Phe) + L-phenylalanine + ATP = L-phenylalanyl-tRNA(Phe) + AMP + diphosphate + H(+)</text>
        <dbReference type="Rhea" id="RHEA:19413"/>
        <dbReference type="Rhea" id="RHEA-COMP:9668"/>
        <dbReference type="Rhea" id="RHEA-COMP:9699"/>
        <dbReference type="ChEBI" id="CHEBI:15378"/>
        <dbReference type="ChEBI" id="CHEBI:30616"/>
        <dbReference type="ChEBI" id="CHEBI:33019"/>
        <dbReference type="ChEBI" id="CHEBI:58095"/>
        <dbReference type="ChEBI" id="CHEBI:78442"/>
        <dbReference type="ChEBI" id="CHEBI:78531"/>
        <dbReference type="ChEBI" id="CHEBI:456215"/>
        <dbReference type="EC" id="6.1.1.20"/>
    </reaction>
</comment>
<comment type="subcellular location">
    <subcellularLocation>
        <location evidence="7">Mitochondrion matrix</location>
    </subcellularLocation>
</comment>
<comment type="similarity">
    <text evidence="7">Belongs to the class-II aminoacyl-tRNA synthetase family.</text>
</comment>
<feature type="transit peptide" description="Mitochondrion" evidence="3">
    <location>
        <begin position="1"/>
        <end position="27"/>
    </location>
</feature>
<feature type="chain" id="PRO_0000035816" description="Probable phenylalanine--tRNA ligase, mitochondrial">
    <location>
        <begin position="28"/>
        <end position="453"/>
    </location>
</feature>
<feature type="domain" description="FDX-ACB" evidence="4">
    <location>
        <begin position="356"/>
        <end position="453"/>
    </location>
</feature>
<feature type="binding site" evidence="1">
    <location>
        <begin position="142"/>
        <end position="145"/>
    </location>
    <ligand>
        <name>substrate</name>
    </ligand>
</feature>
<feature type="binding site" evidence="1">
    <location>
        <position position="164"/>
    </location>
    <ligand>
        <name>substrate</name>
    </ligand>
</feature>
<feature type="binding site" evidence="1">
    <location>
        <begin position="171"/>
        <end position="173"/>
    </location>
    <ligand>
        <name>substrate</name>
    </ligand>
</feature>
<feature type="binding site" evidence="1">
    <location>
        <begin position="178"/>
        <end position="180"/>
    </location>
    <ligand>
        <name>substrate</name>
    </ligand>
</feature>
<feature type="binding site" evidence="1">
    <location>
        <position position="285"/>
    </location>
    <ligand>
        <name>substrate</name>
    </ligand>
</feature>
<feature type="binding site" evidence="1">
    <location>
        <position position="310"/>
    </location>
    <ligand>
        <name>substrate</name>
    </ligand>
</feature>
<feature type="sequence conflict" description="In Ref. 1; AAB65750." evidence="7" ref="1">
    <original>SSKFMDQTKQPCHTLE</original>
    <variation>HPSSWTKPNSPATRR</variation>
    <location>
        <begin position="217"/>
        <end position="232"/>
    </location>
</feature>
<reference evidence="7" key="1">
    <citation type="journal article" date="1998" name="Insect Mol. Biol.">
        <title>Structure and associated mutational effects of the cysteine proteinase (CP1) gene of Drosophila melanogaster.</title>
        <authorList>
            <person name="Gray Y.H.M."/>
            <person name="Sved J.A."/>
            <person name="Preston C.R."/>
            <person name="Engels W.R."/>
        </authorList>
    </citation>
    <scope>NUCLEOTIDE SEQUENCE [GENOMIC DNA]</scope>
</reference>
<reference evidence="7" key="2">
    <citation type="journal article" date="2000" name="Science">
        <title>The genome sequence of Drosophila melanogaster.</title>
        <authorList>
            <person name="Adams M.D."/>
            <person name="Celniker S.E."/>
            <person name="Holt R.A."/>
            <person name="Evans C.A."/>
            <person name="Gocayne J.D."/>
            <person name="Amanatides P.G."/>
            <person name="Scherer S.E."/>
            <person name="Li P.W."/>
            <person name="Hoskins R.A."/>
            <person name="Galle R.F."/>
            <person name="George R.A."/>
            <person name="Lewis S.E."/>
            <person name="Richards S."/>
            <person name="Ashburner M."/>
            <person name="Henderson S.N."/>
            <person name="Sutton G.G."/>
            <person name="Wortman J.R."/>
            <person name="Yandell M.D."/>
            <person name="Zhang Q."/>
            <person name="Chen L.X."/>
            <person name="Brandon R.C."/>
            <person name="Rogers Y.-H.C."/>
            <person name="Blazej R.G."/>
            <person name="Champe M."/>
            <person name="Pfeiffer B.D."/>
            <person name="Wan K.H."/>
            <person name="Doyle C."/>
            <person name="Baxter E.G."/>
            <person name="Helt G."/>
            <person name="Nelson C.R."/>
            <person name="Miklos G.L.G."/>
            <person name="Abril J.F."/>
            <person name="Agbayani A."/>
            <person name="An H.-J."/>
            <person name="Andrews-Pfannkoch C."/>
            <person name="Baldwin D."/>
            <person name="Ballew R.M."/>
            <person name="Basu A."/>
            <person name="Baxendale J."/>
            <person name="Bayraktaroglu L."/>
            <person name="Beasley E.M."/>
            <person name="Beeson K.Y."/>
            <person name="Benos P.V."/>
            <person name="Berman B.P."/>
            <person name="Bhandari D."/>
            <person name="Bolshakov S."/>
            <person name="Borkova D."/>
            <person name="Botchan M.R."/>
            <person name="Bouck J."/>
            <person name="Brokstein P."/>
            <person name="Brottier P."/>
            <person name="Burtis K.C."/>
            <person name="Busam D.A."/>
            <person name="Butler H."/>
            <person name="Cadieu E."/>
            <person name="Center A."/>
            <person name="Chandra I."/>
            <person name="Cherry J.M."/>
            <person name="Cawley S."/>
            <person name="Dahlke C."/>
            <person name="Davenport L.B."/>
            <person name="Davies P."/>
            <person name="de Pablos B."/>
            <person name="Delcher A."/>
            <person name="Deng Z."/>
            <person name="Mays A.D."/>
            <person name="Dew I."/>
            <person name="Dietz S.M."/>
            <person name="Dodson K."/>
            <person name="Doup L.E."/>
            <person name="Downes M."/>
            <person name="Dugan-Rocha S."/>
            <person name="Dunkov B.C."/>
            <person name="Dunn P."/>
            <person name="Durbin K.J."/>
            <person name="Evangelista C.C."/>
            <person name="Ferraz C."/>
            <person name="Ferriera S."/>
            <person name="Fleischmann W."/>
            <person name="Fosler C."/>
            <person name="Gabrielian A.E."/>
            <person name="Garg N.S."/>
            <person name="Gelbart W.M."/>
            <person name="Glasser K."/>
            <person name="Glodek A."/>
            <person name="Gong F."/>
            <person name="Gorrell J.H."/>
            <person name="Gu Z."/>
            <person name="Guan P."/>
            <person name="Harris M."/>
            <person name="Harris N.L."/>
            <person name="Harvey D.A."/>
            <person name="Heiman T.J."/>
            <person name="Hernandez J.R."/>
            <person name="Houck J."/>
            <person name="Hostin D."/>
            <person name="Houston K.A."/>
            <person name="Howland T.J."/>
            <person name="Wei M.-H."/>
            <person name="Ibegwam C."/>
            <person name="Jalali M."/>
            <person name="Kalush F."/>
            <person name="Karpen G.H."/>
            <person name="Ke Z."/>
            <person name="Kennison J.A."/>
            <person name="Ketchum K.A."/>
            <person name="Kimmel B.E."/>
            <person name="Kodira C.D."/>
            <person name="Kraft C.L."/>
            <person name="Kravitz S."/>
            <person name="Kulp D."/>
            <person name="Lai Z."/>
            <person name="Lasko P."/>
            <person name="Lei Y."/>
            <person name="Levitsky A.A."/>
            <person name="Li J.H."/>
            <person name="Li Z."/>
            <person name="Liang Y."/>
            <person name="Lin X."/>
            <person name="Liu X."/>
            <person name="Mattei B."/>
            <person name="McIntosh T.C."/>
            <person name="McLeod M.P."/>
            <person name="McPherson D."/>
            <person name="Merkulov G."/>
            <person name="Milshina N.V."/>
            <person name="Mobarry C."/>
            <person name="Morris J."/>
            <person name="Moshrefi A."/>
            <person name="Mount S.M."/>
            <person name="Moy M."/>
            <person name="Murphy B."/>
            <person name="Murphy L."/>
            <person name="Muzny D.M."/>
            <person name="Nelson D.L."/>
            <person name="Nelson D.R."/>
            <person name="Nelson K.A."/>
            <person name="Nixon K."/>
            <person name="Nusskern D.R."/>
            <person name="Pacleb J.M."/>
            <person name="Palazzolo M."/>
            <person name="Pittman G.S."/>
            <person name="Pan S."/>
            <person name="Pollard J."/>
            <person name="Puri V."/>
            <person name="Reese M.G."/>
            <person name="Reinert K."/>
            <person name="Remington K."/>
            <person name="Saunders R.D.C."/>
            <person name="Scheeler F."/>
            <person name="Shen H."/>
            <person name="Shue B.C."/>
            <person name="Siden-Kiamos I."/>
            <person name="Simpson M."/>
            <person name="Skupski M.P."/>
            <person name="Smith T.J."/>
            <person name="Spier E."/>
            <person name="Spradling A.C."/>
            <person name="Stapleton M."/>
            <person name="Strong R."/>
            <person name="Sun E."/>
            <person name="Svirskas R."/>
            <person name="Tector C."/>
            <person name="Turner R."/>
            <person name="Venter E."/>
            <person name="Wang A.H."/>
            <person name="Wang X."/>
            <person name="Wang Z.-Y."/>
            <person name="Wassarman D.A."/>
            <person name="Weinstock G.M."/>
            <person name="Weissenbach J."/>
            <person name="Williams S.M."/>
            <person name="Woodage T."/>
            <person name="Worley K.C."/>
            <person name="Wu D."/>
            <person name="Yang S."/>
            <person name="Yao Q.A."/>
            <person name="Ye J."/>
            <person name="Yeh R.-F."/>
            <person name="Zaveri J.S."/>
            <person name="Zhan M."/>
            <person name="Zhang G."/>
            <person name="Zhao Q."/>
            <person name="Zheng L."/>
            <person name="Zheng X.H."/>
            <person name="Zhong F.N."/>
            <person name="Zhong W."/>
            <person name="Zhou X."/>
            <person name="Zhu S.C."/>
            <person name="Zhu X."/>
            <person name="Smith H.O."/>
            <person name="Gibbs R.A."/>
            <person name="Myers E.W."/>
            <person name="Rubin G.M."/>
            <person name="Venter J.C."/>
        </authorList>
    </citation>
    <scope>NUCLEOTIDE SEQUENCE [LARGE SCALE GENOMIC DNA]</scope>
    <source>
        <strain evidence="5">Berkeley</strain>
    </source>
</reference>
<reference key="3">
    <citation type="journal article" date="2002" name="Genome Biol.">
        <title>Annotation of the Drosophila melanogaster euchromatic genome: a systematic review.</title>
        <authorList>
            <person name="Misra S."/>
            <person name="Crosby M.A."/>
            <person name="Mungall C.J."/>
            <person name="Matthews B.B."/>
            <person name="Campbell K.S."/>
            <person name="Hradecky P."/>
            <person name="Huang Y."/>
            <person name="Kaminker J.S."/>
            <person name="Millburn G.H."/>
            <person name="Prochnik S.E."/>
            <person name="Smith C.D."/>
            <person name="Tupy J.L."/>
            <person name="Whitfield E.J."/>
            <person name="Bayraktaroglu L."/>
            <person name="Berman B.P."/>
            <person name="Bettencourt B.R."/>
            <person name="Celniker S.E."/>
            <person name="de Grey A.D.N.J."/>
            <person name="Drysdale R.A."/>
            <person name="Harris N.L."/>
            <person name="Richter J."/>
            <person name="Russo S."/>
            <person name="Schroeder A.J."/>
            <person name="Shu S.Q."/>
            <person name="Stapleton M."/>
            <person name="Yamada C."/>
            <person name="Ashburner M."/>
            <person name="Gelbart W.M."/>
            <person name="Rubin G.M."/>
            <person name="Lewis S.E."/>
        </authorList>
    </citation>
    <scope>GENOME REANNOTATION</scope>
    <source>
        <strain>Berkeley</strain>
    </source>
</reference>
<reference evidence="7" key="4">
    <citation type="journal article" date="2002" name="Genome Biol.">
        <title>A Drosophila full-length cDNA resource.</title>
        <authorList>
            <person name="Stapleton M."/>
            <person name="Carlson J.W."/>
            <person name="Brokstein P."/>
            <person name="Yu C."/>
            <person name="Champe M."/>
            <person name="George R.A."/>
            <person name="Guarin H."/>
            <person name="Kronmiller B."/>
            <person name="Pacleb J.M."/>
            <person name="Park S."/>
            <person name="Wan K.H."/>
            <person name="Rubin G.M."/>
            <person name="Celniker S.E."/>
        </authorList>
    </citation>
    <scope>NUCLEOTIDE SEQUENCE [LARGE SCALE MRNA]</scope>
    <source>
        <strain evidence="6">Berkeley</strain>
        <tissue evidence="6">Embryo</tissue>
    </source>
</reference>
<protein>
    <recommendedName>
        <fullName>Probable phenylalanine--tRNA ligase, mitochondrial</fullName>
        <ecNumber>6.1.1.20</ecNumber>
    </recommendedName>
    <alternativeName>
        <fullName>Phenylalanyl-tRNA synthetase</fullName>
        <shortName>PheRS</shortName>
    </alternativeName>
</protein>
<keyword id="KW-0030">Aminoacyl-tRNA synthetase</keyword>
<keyword id="KW-0067">ATP-binding</keyword>
<keyword id="KW-0436">Ligase</keyword>
<keyword id="KW-0496">Mitochondrion</keyword>
<keyword id="KW-0547">Nucleotide-binding</keyword>
<keyword id="KW-0648">Protein biosynthesis</keyword>
<keyword id="KW-1185">Reference proteome</keyword>
<keyword id="KW-0809">Transit peptide</keyword>